<protein>
    <recommendedName>
        <fullName>Myelin protein zero-like protein 2</fullName>
    </recommendedName>
    <alternativeName>
        <fullName>Epithelial V-like antigen 1</fullName>
    </alternativeName>
</protein>
<comment type="function">
    <text>Mediates homophilic cell-cell adhesion.</text>
</comment>
<comment type="interaction">
    <interactant intactId="EBI-3906725">
        <id>O60487</id>
    </interactant>
    <interactant intactId="EBI-4314854">
        <id>Q6UWV2</id>
        <label>MPZL3</label>
    </interactant>
    <organismsDiffer>false</organismsDiffer>
    <experiments>3</experiments>
</comment>
<comment type="subcellular location">
    <subcellularLocation>
        <location evidence="9">Membrane</location>
        <topology evidence="9">Single-pass type I membrane protein</topology>
    </subcellularLocation>
</comment>
<comment type="tissue specificity">
    <text evidence="4">Widely expressed. In fetal tissues, highest expression in the inner ear. In adult tissues, highest levels in thymus and lung.</text>
</comment>
<comment type="disease" evidence="4 5 6 7">
    <disease id="DI-05349">
        <name>Deafness, autosomal recessive, 111</name>
        <acronym>DFNB111</acronym>
        <description>A form of non-syndromic, sensorineural deafness characterized by early-onset, moderate to severe hearing loss with no vestibular involvement. Sensorineural deafness results from damage to the neural receptors of the inner ear, the nerve pathways to the brain, or the area of the brain that receives sound information.</description>
        <dbReference type="MIM" id="618145"/>
    </disease>
    <text>The disease is caused by variants affecting the gene represented in this entry.</text>
</comment>
<comment type="similarity">
    <text evidence="9">Belongs to the myelin P0 protein family.</text>
</comment>
<proteinExistence type="evidence at protein level"/>
<keyword id="KW-0130">Cell adhesion</keyword>
<keyword id="KW-0209">Deafness</keyword>
<keyword id="KW-0225">Disease variant</keyword>
<keyword id="KW-1015">Disulfide bond</keyword>
<keyword id="KW-0325">Glycoprotein</keyword>
<keyword id="KW-0393">Immunoglobulin domain</keyword>
<keyword id="KW-0472">Membrane</keyword>
<keyword id="KW-1010">Non-syndromic deafness</keyword>
<keyword id="KW-1267">Proteomics identification</keyword>
<keyword id="KW-1185">Reference proteome</keyword>
<keyword id="KW-0732">Signal</keyword>
<keyword id="KW-0812">Transmembrane</keyword>
<keyword id="KW-1133">Transmembrane helix</keyword>
<gene>
    <name type="primary">MPZL2</name>
    <name evidence="8" type="synonym">EVA</name>
    <name type="synonym">EVA1</name>
    <name type="ORF">UNQ606/PRO1192</name>
</gene>
<name>MPZL2_HUMAN</name>
<sequence>MYGKSSTRAVLLLLGIQLTALWPIAAVEIYTSRVLEAVNGTDARLKCTFSSFAPVGDALTVTWNFRPLDGGPEQFVFYYHIDPFQPMSGRFKDRVSWDGNPERYDASILLWKLQFDDNGTYTCQVKNPPDVDGVIGEIRLSVVHTVRFSEIHFLALAIGSACALMIIIVIVVVLFQHYRKKRWAERAHKVVEIKSKEEERLNQEKKVSVYLEDTD</sequence>
<dbReference type="EMBL" id="AF030455">
    <property type="protein sequence ID" value="AAC39762.1"/>
    <property type="molecule type" value="mRNA"/>
</dbReference>
<dbReference type="EMBL" id="AF275945">
    <property type="protein sequence ID" value="AAF87240.1"/>
    <property type="molecule type" value="mRNA"/>
</dbReference>
<dbReference type="EMBL" id="AF304447">
    <property type="protein sequence ID" value="AAG23183.1"/>
    <property type="molecule type" value="mRNA"/>
</dbReference>
<dbReference type="EMBL" id="AY359061">
    <property type="protein sequence ID" value="AAQ89420.1"/>
    <property type="molecule type" value="mRNA"/>
</dbReference>
<dbReference type="EMBL" id="AK290326">
    <property type="protein sequence ID" value="BAF83015.1"/>
    <property type="molecule type" value="mRNA"/>
</dbReference>
<dbReference type="EMBL" id="CH471065">
    <property type="protein sequence ID" value="EAW67358.1"/>
    <property type="molecule type" value="Genomic_DNA"/>
</dbReference>
<dbReference type="EMBL" id="BC017774">
    <property type="protein sequence ID" value="AAH17774.1"/>
    <property type="molecule type" value="mRNA"/>
</dbReference>
<dbReference type="CCDS" id="CCDS8393.1"/>
<dbReference type="RefSeq" id="NP_005788.1">
    <property type="nucleotide sequence ID" value="NM_005797.4"/>
</dbReference>
<dbReference type="RefSeq" id="NP_658911.1">
    <property type="nucleotide sequence ID" value="NM_144765.3"/>
</dbReference>
<dbReference type="SMR" id="O60487"/>
<dbReference type="BioGRID" id="115500">
    <property type="interactions" value="21"/>
</dbReference>
<dbReference type="FunCoup" id="O60487">
    <property type="interactions" value="255"/>
</dbReference>
<dbReference type="IntAct" id="O60487">
    <property type="interactions" value="10"/>
</dbReference>
<dbReference type="STRING" id="9606.ENSP00000278937"/>
<dbReference type="GlyConnect" id="1528">
    <property type="glycosylation" value="11 N-Linked glycans (2 sites)"/>
</dbReference>
<dbReference type="GlyCosmos" id="O60487">
    <property type="glycosylation" value="2 sites, 11 glycans"/>
</dbReference>
<dbReference type="GlyGen" id="O60487">
    <property type="glycosylation" value="6 sites, 33 N-linked glycans (2 sites), 1 O-linked glycan (3 sites)"/>
</dbReference>
<dbReference type="iPTMnet" id="O60487"/>
<dbReference type="PhosphoSitePlus" id="O60487"/>
<dbReference type="BioMuta" id="MPZL2"/>
<dbReference type="jPOST" id="O60487"/>
<dbReference type="MassIVE" id="O60487"/>
<dbReference type="PaxDb" id="9606-ENSP00000278937"/>
<dbReference type="PeptideAtlas" id="O60487"/>
<dbReference type="ProteomicsDB" id="49425"/>
<dbReference type="TopDownProteomics" id="O60487"/>
<dbReference type="Antibodypedia" id="32443">
    <property type="antibodies" value="251 antibodies from 24 providers"/>
</dbReference>
<dbReference type="DNASU" id="10205"/>
<dbReference type="Ensembl" id="ENST00000278937.7">
    <property type="protein sequence ID" value="ENSP00000278937.2"/>
    <property type="gene ID" value="ENSG00000149573.9"/>
</dbReference>
<dbReference type="Ensembl" id="ENST00000438295.2">
    <property type="protein sequence ID" value="ENSP00000408362.2"/>
    <property type="gene ID" value="ENSG00000149573.9"/>
</dbReference>
<dbReference type="GeneID" id="10205"/>
<dbReference type="KEGG" id="hsa:10205"/>
<dbReference type="MANE-Select" id="ENST00000278937.7">
    <property type="protein sequence ID" value="ENSP00000278937.2"/>
    <property type="RefSeq nucleotide sequence ID" value="NM_005797.4"/>
    <property type="RefSeq protein sequence ID" value="NP_005788.1"/>
</dbReference>
<dbReference type="UCSC" id="uc001psn.4">
    <property type="organism name" value="human"/>
</dbReference>
<dbReference type="AGR" id="HGNC:3496"/>
<dbReference type="CTD" id="10205"/>
<dbReference type="DisGeNET" id="10205"/>
<dbReference type="GeneCards" id="MPZL2"/>
<dbReference type="HGNC" id="HGNC:3496">
    <property type="gene designation" value="MPZL2"/>
</dbReference>
<dbReference type="HPA" id="ENSG00000149573">
    <property type="expression patterns" value="Tissue enhanced (esophagus, urinary bladder)"/>
</dbReference>
<dbReference type="MalaCards" id="MPZL2"/>
<dbReference type="MIM" id="604873">
    <property type="type" value="gene"/>
</dbReference>
<dbReference type="MIM" id="618145">
    <property type="type" value="phenotype"/>
</dbReference>
<dbReference type="neXtProt" id="NX_O60487"/>
<dbReference type="OpenTargets" id="ENSG00000149573"/>
<dbReference type="Orphanet" id="90636">
    <property type="disease" value="Rare autosomal recessive non-syndromic sensorineural deafness type DFNB"/>
</dbReference>
<dbReference type="PharmGKB" id="PA162396145"/>
<dbReference type="VEuPathDB" id="HostDB:ENSG00000149573"/>
<dbReference type="eggNOG" id="ENOG502RYWU">
    <property type="taxonomic scope" value="Eukaryota"/>
</dbReference>
<dbReference type="GeneTree" id="ENSGT01030000234556"/>
<dbReference type="HOGENOM" id="CLU_090350_0_0_1"/>
<dbReference type="InParanoid" id="O60487"/>
<dbReference type="OMA" id="FHEQPYP"/>
<dbReference type="OrthoDB" id="9419796at2759"/>
<dbReference type="PAN-GO" id="O60487">
    <property type="GO annotations" value="2 GO annotations based on evolutionary models"/>
</dbReference>
<dbReference type="PhylomeDB" id="O60487"/>
<dbReference type="TreeFam" id="TF331728"/>
<dbReference type="PathwayCommons" id="O60487"/>
<dbReference type="SignaLink" id="O60487"/>
<dbReference type="BioGRID-ORCS" id="10205">
    <property type="hits" value="13 hits in 1158 CRISPR screens"/>
</dbReference>
<dbReference type="ChiTaRS" id="MPZL2">
    <property type="organism name" value="human"/>
</dbReference>
<dbReference type="GenomeRNAi" id="10205"/>
<dbReference type="Pharos" id="O60487">
    <property type="development level" value="Tbio"/>
</dbReference>
<dbReference type="PRO" id="PR:O60487"/>
<dbReference type="Proteomes" id="UP000005640">
    <property type="component" value="Chromosome 11"/>
</dbReference>
<dbReference type="RNAct" id="O60487">
    <property type="molecule type" value="protein"/>
</dbReference>
<dbReference type="Bgee" id="ENSG00000149573">
    <property type="expression patterns" value="Expressed in gingival epithelium and 162 other cell types or tissues"/>
</dbReference>
<dbReference type="ExpressionAtlas" id="O60487">
    <property type="expression patterns" value="baseline and differential"/>
</dbReference>
<dbReference type="GO" id="GO:0005856">
    <property type="term" value="C:cytoskeleton"/>
    <property type="evidence" value="ECO:0000304"/>
    <property type="project" value="ProtInc"/>
</dbReference>
<dbReference type="GO" id="GO:0005886">
    <property type="term" value="C:plasma membrane"/>
    <property type="evidence" value="ECO:0000318"/>
    <property type="project" value="GO_Central"/>
</dbReference>
<dbReference type="GO" id="GO:0009653">
    <property type="term" value="P:anatomical structure morphogenesis"/>
    <property type="evidence" value="ECO:0000304"/>
    <property type="project" value="ProtInc"/>
</dbReference>
<dbReference type="GO" id="GO:0098609">
    <property type="term" value="P:cell-cell adhesion"/>
    <property type="evidence" value="ECO:0000318"/>
    <property type="project" value="GO_Central"/>
</dbReference>
<dbReference type="GO" id="GO:0007156">
    <property type="term" value="P:homophilic cell adhesion via plasma membrane adhesion molecules"/>
    <property type="evidence" value="ECO:0000304"/>
    <property type="project" value="ProtInc"/>
</dbReference>
<dbReference type="CDD" id="cd05880">
    <property type="entry name" value="IgV_EVA1"/>
    <property type="match status" value="1"/>
</dbReference>
<dbReference type="FunFam" id="2.60.40.10:FF:000193">
    <property type="entry name" value="Myelin protein zero-like 1 like"/>
    <property type="match status" value="1"/>
</dbReference>
<dbReference type="Gene3D" id="2.60.40.10">
    <property type="entry name" value="Immunoglobulins"/>
    <property type="match status" value="1"/>
</dbReference>
<dbReference type="InterPro" id="IPR007110">
    <property type="entry name" value="Ig-like_dom"/>
</dbReference>
<dbReference type="InterPro" id="IPR036179">
    <property type="entry name" value="Ig-like_dom_sf"/>
</dbReference>
<dbReference type="InterPro" id="IPR013783">
    <property type="entry name" value="Ig-like_fold"/>
</dbReference>
<dbReference type="InterPro" id="IPR003599">
    <property type="entry name" value="Ig_sub"/>
</dbReference>
<dbReference type="InterPro" id="IPR013106">
    <property type="entry name" value="Ig_V-set"/>
</dbReference>
<dbReference type="InterPro" id="IPR029863">
    <property type="entry name" value="MPZL2_Ig-like_dom"/>
</dbReference>
<dbReference type="InterPro" id="IPR000920">
    <property type="entry name" value="Myelin_P0-rel"/>
</dbReference>
<dbReference type="PANTHER" id="PTHR13869">
    <property type="entry name" value="MYELIN P0 RELATED"/>
    <property type="match status" value="1"/>
</dbReference>
<dbReference type="PANTHER" id="PTHR13869:SF21">
    <property type="entry name" value="MYELIN PROTEIN ZERO-LIKE PROTEIN 2"/>
    <property type="match status" value="1"/>
</dbReference>
<dbReference type="Pfam" id="PF07686">
    <property type="entry name" value="V-set"/>
    <property type="match status" value="1"/>
</dbReference>
<dbReference type="PRINTS" id="PR00213">
    <property type="entry name" value="MYELINP0"/>
</dbReference>
<dbReference type="SMART" id="SM00409">
    <property type="entry name" value="IG"/>
    <property type="match status" value="1"/>
</dbReference>
<dbReference type="SMART" id="SM00406">
    <property type="entry name" value="IGv"/>
    <property type="match status" value="1"/>
</dbReference>
<dbReference type="SUPFAM" id="SSF48726">
    <property type="entry name" value="Immunoglobulin"/>
    <property type="match status" value="1"/>
</dbReference>
<dbReference type="PROSITE" id="PS50835">
    <property type="entry name" value="IG_LIKE"/>
    <property type="match status" value="1"/>
</dbReference>
<organism>
    <name type="scientific">Homo sapiens</name>
    <name type="common">Human</name>
    <dbReference type="NCBI Taxonomy" id="9606"/>
    <lineage>
        <taxon>Eukaryota</taxon>
        <taxon>Metazoa</taxon>
        <taxon>Chordata</taxon>
        <taxon>Craniata</taxon>
        <taxon>Vertebrata</taxon>
        <taxon>Euteleostomi</taxon>
        <taxon>Mammalia</taxon>
        <taxon>Eutheria</taxon>
        <taxon>Euarchontoglires</taxon>
        <taxon>Primates</taxon>
        <taxon>Haplorrhini</taxon>
        <taxon>Catarrhini</taxon>
        <taxon>Hominidae</taxon>
        <taxon>Homo</taxon>
    </lineage>
</organism>
<accession>O60487</accession>
<accession>A8K2R1</accession>
<feature type="signal peptide" evidence="1">
    <location>
        <begin position="1"/>
        <end position="26"/>
    </location>
</feature>
<feature type="chain" id="PRO_0000014756" description="Myelin protein zero-like protein 2">
    <location>
        <begin position="27"/>
        <end position="215"/>
    </location>
</feature>
<feature type="topological domain" description="Extracellular" evidence="1">
    <location>
        <begin position="27"/>
        <end position="154"/>
    </location>
</feature>
<feature type="transmembrane region" description="Helical" evidence="1">
    <location>
        <begin position="155"/>
        <end position="175"/>
    </location>
</feature>
<feature type="topological domain" description="Cytoplasmic" evidence="1">
    <location>
        <begin position="176"/>
        <end position="215"/>
    </location>
</feature>
<feature type="domain" description="Ig-like V-type">
    <location>
        <begin position="27"/>
        <end position="141"/>
    </location>
</feature>
<feature type="glycosylation site" description="N-linked (GlcNAc...) asparagine" evidence="3">
    <location>
        <position position="39"/>
    </location>
</feature>
<feature type="glycosylation site" description="N-linked (GlcNAc...) asparagine" evidence="1">
    <location>
        <position position="118"/>
    </location>
</feature>
<feature type="disulfide bond" evidence="2">
    <location>
        <begin position="47"/>
        <end position="123"/>
    </location>
</feature>
<feature type="sequence variant" id="VAR_088675" description="In DFNB111; uncertain significance." evidence="6">
    <original>L</original>
    <variation>F</variation>
    <location>
        <position position="18"/>
    </location>
</feature>
<feature type="sequence variant" id="VAR_081571" description="In DFNB111; pathogenic." evidence="4 6">
    <location>
        <begin position="74"/>
        <end position="215"/>
    </location>
</feature>
<feature type="sequence variant" id="VAR_081572" description="In DFNB111; uncertain significance; dbSNP:rs187493775." evidence="4">
    <original>R</original>
    <variation>W</variation>
    <location>
        <position position="90"/>
    </location>
</feature>
<feature type="sequence variant" id="VAR_089216" description="In DFNB111; likely pathogenic." evidence="7">
    <original>R</original>
    <variation>W</variation>
    <location>
        <position position="94"/>
    </location>
</feature>
<feature type="sequence variant" id="VAR_081573" description="In DFNB111; uncertain significance." evidence="4">
    <location>
        <begin position="182"/>
        <end position="215"/>
    </location>
</feature>
<evidence type="ECO:0000255" key="1"/>
<evidence type="ECO:0000255" key="2">
    <source>
        <dbReference type="PROSITE-ProRule" id="PRU00114"/>
    </source>
</evidence>
<evidence type="ECO:0000269" key="3">
    <source>
    </source>
</evidence>
<evidence type="ECO:0000269" key="4">
    <source>
    </source>
</evidence>
<evidence type="ECO:0000269" key="5">
    <source>
    </source>
</evidence>
<evidence type="ECO:0000269" key="6">
    <source>
    </source>
</evidence>
<evidence type="ECO:0000269" key="7">
    <source>
    </source>
</evidence>
<evidence type="ECO:0000303" key="8">
    <source>
    </source>
</evidence>
<evidence type="ECO:0000305" key="9"/>
<reference key="1">
    <citation type="journal article" date="1998" name="J. Cell Biol.">
        <title>Epithelial V-like antigen (EVA), a novel member of the immunoglobulin superfamily, expressed in embryonic epithelia with a potential role as homotypic adhesion molecule in thymus histogenesis.</title>
        <authorList>
            <person name="Guttinger M."/>
            <person name="Sutti F."/>
            <person name="Panigada M."/>
            <person name="Porcellini S."/>
            <person name="Merati B."/>
            <person name="Mariani M."/>
            <person name="Teesalu T."/>
            <person name="Consalez G.G."/>
            <person name="Grassi F."/>
        </authorList>
    </citation>
    <scope>NUCLEOTIDE SEQUENCE [MRNA]</scope>
    <source>
        <tissue>Liver</tissue>
        <tissue>Spleen</tissue>
    </source>
</reference>
<reference key="2">
    <citation type="submission" date="2000-06" db="EMBL/GenBank/DDBJ databases">
        <title>Identification of putative target genes involved in LMO2-induced leukemogenesis.</title>
        <authorList>
            <person name="Davenport J.W."/>
            <person name="Neale G.A.M."/>
            <person name="Goorha R.M."/>
        </authorList>
    </citation>
    <scope>NUCLEOTIDE SEQUENCE [MRNA]</scope>
    <source>
        <tissue>Endometrial tumor</tissue>
    </source>
</reference>
<reference key="3">
    <citation type="submission" date="2000-09" db="EMBL/GenBank/DDBJ databases">
        <title>Human EVA1 gene which is downregulated in lung carcinoma cells.</title>
        <authorList>
            <person name="Pietas A."/>
            <person name="Petersen I."/>
            <person name="Schluens K."/>
            <person name="Petersen S."/>
        </authorList>
    </citation>
    <scope>NUCLEOTIDE SEQUENCE [MRNA]</scope>
    <source>
        <tissue>Squamous cell carcinoma</tissue>
    </source>
</reference>
<reference key="4">
    <citation type="journal article" date="2003" name="Genome Res.">
        <title>The secreted protein discovery initiative (SPDI), a large-scale effort to identify novel human secreted and transmembrane proteins: a bioinformatics assessment.</title>
        <authorList>
            <person name="Clark H.F."/>
            <person name="Gurney A.L."/>
            <person name="Abaya E."/>
            <person name="Baker K."/>
            <person name="Baldwin D.T."/>
            <person name="Brush J."/>
            <person name="Chen J."/>
            <person name="Chow B."/>
            <person name="Chui C."/>
            <person name="Crowley C."/>
            <person name="Currell B."/>
            <person name="Deuel B."/>
            <person name="Dowd P."/>
            <person name="Eaton D."/>
            <person name="Foster J.S."/>
            <person name="Grimaldi C."/>
            <person name="Gu Q."/>
            <person name="Hass P.E."/>
            <person name="Heldens S."/>
            <person name="Huang A."/>
            <person name="Kim H.S."/>
            <person name="Klimowski L."/>
            <person name="Jin Y."/>
            <person name="Johnson S."/>
            <person name="Lee J."/>
            <person name="Lewis L."/>
            <person name="Liao D."/>
            <person name="Mark M.R."/>
            <person name="Robbie E."/>
            <person name="Sanchez C."/>
            <person name="Schoenfeld J."/>
            <person name="Seshagiri S."/>
            <person name="Simmons L."/>
            <person name="Singh J."/>
            <person name="Smith V."/>
            <person name="Stinson J."/>
            <person name="Vagts A."/>
            <person name="Vandlen R.L."/>
            <person name="Watanabe C."/>
            <person name="Wieand D."/>
            <person name="Woods K."/>
            <person name="Xie M.-H."/>
            <person name="Yansura D.G."/>
            <person name="Yi S."/>
            <person name="Yu G."/>
            <person name="Yuan J."/>
            <person name="Zhang M."/>
            <person name="Zhang Z."/>
            <person name="Goddard A.D."/>
            <person name="Wood W.I."/>
            <person name="Godowski P.J."/>
            <person name="Gray A.M."/>
        </authorList>
    </citation>
    <scope>NUCLEOTIDE SEQUENCE [LARGE SCALE MRNA]</scope>
</reference>
<reference key="5">
    <citation type="journal article" date="2004" name="Nat. Genet.">
        <title>Complete sequencing and characterization of 21,243 full-length human cDNAs.</title>
        <authorList>
            <person name="Ota T."/>
            <person name="Suzuki Y."/>
            <person name="Nishikawa T."/>
            <person name="Otsuki T."/>
            <person name="Sugiyama T."/>
            <person name="Irie R."/>
            <person name="Wakamatsu A."/>
            <person name="Hayashi K."/>
            <person name="Sato H."/>
            <person name="Nagai K."/>
            <person name="Kimura K."/>
            <person name="Makita H."/>
            <person name="Sekine M."/>
            <person name="Obayashi M."/>
            <person name="Nishi T."/>
            <person name="Shibahara T."/>
            <person name="Tanaka T."/>
            <person name="Ishii S."/>
            <person name="Yamamoto J."/>
            <person name="Saito K."/>
            <person name="Kawai Y."/>
            <person name="Isono Y."/>
            <person name="Nakamura Y."/>
            <person name="Nagahari K."/>
            <person name="Murakami K."/>
            <person name="Yasuda T."/>
            <person name="Iwayanagi T."/>
            <person name="Wagatsuma M."/>
            <person name="Shiratori A."/>
            <person name="Sudo H."/>
            <person name="Hosoiri T."/>
            <person name="Kaku Y."/>
            <person name="Kodaira H."/>
            <person name="Kondo H."/>
            <person name="Sugawara M."/>
            <person name="Takahashi M."/>
            <person name="Kanda K."/>
            <person name="Yokoi T."/>
            <person name="Furuya T."/>
            <person name="Kikkawa E."/>
            <person name="Omura Y."/>
            <person name="Abe K."/>
            <person name="Kamihara K."/>
            <person name="Katsuta N."/>
            <person name="Sato K."/>
            <person name="Tanikawa M."/>
            <person name="Yamazaki M."/>
            <person name="Ninomiya K."/>
            <person name="Ishibashi T."/>
            <person name="Yamashita H."/>
            <person name="Murakawa K."/>
            <person name="Fujimori K."/>
            <person name="Tanai H."/>
            <person name="Kimata M."/>
            <person name="Watanabe M."/>
            <person name="Hiraoka S."/>
            <person name="Chiba Y."/>
            <person name="Ishida S."/>
            <person name="Ono Y."/>
            <person name="Takiguchi S."/>
            <person name="Watanabe S."/>
            <person name="Yosida M."/>
            <person name="Hotuta T."/>
            <person name="Kusano J."/>
            <person name="Kanehori K."/>
            <person name="Takahashi-Fujii A."/>
            <person name="Hara H."/>
            <person name="Tanase T.-O."/>
            <person name="Nomura Y."/>
            <person name="Togiya S."/>
            <person name="Komai F."/>
            <person name="Hara R."/>
            <person name="Takeuchi K."/>
            <person name="Arita M."/>
            <person name="Imose N."/>
            <person name="Musashino K."/>
            <person name="Yuuki H."/>
            <person name="Oshima A."/>
            <person name="Sasaki N."/>
            <person name="Aotsuka S."/>
            <person name="Yoshikawa Y."/>
            <person name="Matsunawa H."/>
            <person name="Ichihara T."/>
            <person name="Shiohata N."/>
            <person name="Sano S."/>
            <person name="Moriya S."/>
            <person name="Momiyama H."/>
            <person name="Satoh N."/>
            <person name="Takami S."/>
            <person name="Terashima Y."/>
            <person name="Suzuki O."/>
            <person name="Nakagawa S."/>
            <person name="Senoh A."/>
            <person name="Mizoguchi H."/>
            <person name="Goto Y."/>
            <person name="Shimizu F."/>
            <person name="Wakebe H."/>
            <person name="Hishigaki H."/>
            <person name="Watanabe T."/>
            <person name="Sugiyama A."/>
            <person name="Takemoto M."/>
            <person name="Kawakami B."/>
            <person name="Yamazaki M."/>
            <person name="Watanabe K."/>
            <person name="Kumagai A."/>
            <person name="Itakura S."/>
            <person name="Fukuzumi Y."/>
            <person name="Fujimori Y."/>
            <person name="Komiyama M."/>
            <person name="Tashiro H."/>
            <person name="Tanigami A."/>
            <person name="Fujiwara T."/>
            <person name="Ono T."/>
            <person name="Yamada K."/>
            <person name="Fujii Y."/>
            <person name="Ozaki K."/>
            <person name="Hirao M."/>
            <person name="Ohmori Y."/>
            <person name="Kawabata A."/>
            <person name="Hikiji T."/>
            <person name="Kobatake N."/>
            <person name="Inagaki H."/>
            <person name="Ikema Y."/>
            <person name="Okamoto S."/>
            <person name="Okitani R."/>
            <person name="Kawakami T."/>
            <person name="Noguchi S."/>
            <person name="Itoh T."/>
            <person name="Shigeta K."/>
            <person name="Senba T."/>
            <person name="Matsumura K."/>
            <person name="Nakajima Y."/>
            <person name="Mizuno T."/>
            <person name="Morinaga M."/>
            <person name="Sasaki M."/>
            <person name="Togashi T."/>
            <person name="Oyama M."/>
            <person name="Hata H."/>
            <person name="Watanabe M."/>
            <person name="Komatsu T."/>
            <person name="Mizushima-Sugano J."/>
            <person name="Satoh T."/>
            <person name="Shirai Y."/>
            <person name="Takahashi Y."/>
            <person name="Nakagawa K."/>
            <person name="Okumura K."/>
            <person name="Nagase T."/>
            <person name="Nomura N."/>
            <person name="Kikuchi H."/>
            <person name="Masuho Y."/>
            <person name="Yamashita R."/>
            <person name="Nakai K."/>
            <person name="Yada T."/>
            <person name="Nakamura Y."/>
            <person name="Ohara O."/>
            <person name="Isogai T."/>
            <person name="Sugano S."/>
        </authorList>
    </citation>
    <scope>NUCLEOTIDE SEQUENCE [LARGE SCALE MRNA]</scope>
    <source>
        <tissue>Tongue</tissue>
    </source>
</reference>
<reference key="6">
    <citation type="submission" date="2005-07" db="EMBL/GenBank/DDBJ databases">
        <authorList>
            <person name="Mural R.J."/>
            <person name="Istrail S."/>
            <person name="Sutton G.G."/>
            <person name="Florea L."/>
            <person name="Halpern A.L."/>
            <person name="Mobarry C.M."/>
            <person name="Lippert R."/>
            <person name="Walenz B."/>
            <person name="Shatkay H."/>
            <person name="Dew I."/>
            <person name="Miller J.R."/>
            <person name="Flanigan M.J."/>
            <person name="Edwards N.J."/>
            <person name="Bolanos R."/>
            <person name="Fasulo D."/>
            <person name="Halldorsson B.V."/>
            <person name="Hannenhalli S."/>
            <person name="Turner R."/>
            <person name="Yooseph S."/>
            <person name="Lu F."/>
            <person name="Nusskern D.R."/>
            <person name="Shue B.C."/>
            <person name="Zheng X.H."/>
            <person name="Zhong F."/>
            <person name="Delcher A.L."/>
            <person name="Huson D.H."/>
            <person name="Kravitz S.A."/>
            <person name="Mouchard L."/>
            <person name="Reinert K."/>
            <person name="Remington K.A."/>
            <person name="Clark A.G."/>
            <person name="Waterman M.S."/>
            <person name="Eichler E.E."/>
            <person name="Adams M.D."/>
            <person name="Hunkapiller M.W."/>
            <person name="Myers E.W."/>
            <person name="Venter J.C."/>
        </authorList>
    </citation>
    <scope>NUCLEOTIDE SEQUENCE [LARGE SCALE GENOMIC DNA]</scope>
</reference>
<reference key="7">
    <citation type="journal article" date="2004" name="Genome Res.">
        <title>The status, quality, and expansion of the NIH full-length cDNA project: the Mammalian Gene Collection (MGC).</title>
        <authorList>
            <consortium name="The MGC Project Team"/>
        </authorList>
    </citation>
    <scope>NUCLEOTIDE SEQUENCE [LARGE SCALE MRNA]</scope>
    <source>
        <tissue>Lung</tissue>
    </source>
</reference>
<reference key="8">
    <citation type="journal article" date="2009" name="J. Proteome Res.">
        <title>Glycoproteomics analysis of human liver tissue by combination of multiple enzyme digestion and hydrazide chemistry.</title>
        <authorList>
            <person name="Chen R."/>
            <person name="Jiang X."/>
            <person name="Sun D."/>
            <person name="Han G."/>
            <person name="Wang F."/>
            <person name="Ye M."/>
            <person name="Wang L."/>
            <person name="Zou H."/>
        </authorList>
    </citation>
    <scope>GLYCOSYLATION [LARGE SCALE ANALYSIS] AT ASN-39</scope>
    <source>
        <tissue>Liver</tissue>
    </source>
</reference>
<reference key="9">
    <citation type="journal article" date="2018" name="Am. J. Hum. Genet.">
        <title>MPZL2, encoding the epithelial junctional protein myelin protein zero-like 2, is essential for hearing in man and mouse.</title>
        <authorList>
            <person name="Wesdorp M."/>
            <person name="Murillo-Cuesta S."/>
            <person name="Peters T."/>
            <person name="Celaya A.M."/>
            <person name="Oonk A."/>
            <person name="Schraders M."/>
            <person name="Oostrik J."/>
            <person name="Gomez-Rosas E."/>
            <person name="Beynon A.J."/>
            <person name="Hartel B.P."/>
            <person name="Okkersen K."/>
            <person name="Koenen H.J.P.M."/>
            <person name="Weeda J."/>
            <person name="Lelieveld S."/>
            <person name="Voermans N.C."/>
            <person name="Joosten I."/>
            <person name="Hoyng C.B."/>
            <person name="Lichtner P."/>
            <person name="Kunst H.P.M."/>
            <person name="Feenstra I."/>
            <person name="de Bruijn S.E."/>
            <person name="Admiraal R.J.C."/>
            <person name="Yntema H.G."/>
            <person name="van Wijk E."/>
            <person name="Del Castillo I."/>
            <person name="Serra P."/>
            <person name="Varela-Nieto I."/>
            <person name="Pennings R.J.E."/>
            <person name="Kremer H."/>
        </authorList>
    </citation>
    <scope>INVOLVEMENT IN DFNB111</scope>
    <scope>VARIANTS DFNB111 74-GLN--ASP-215 DEL; TRP-90 AND 182-ARG--ASP-215 DEL</scope>
    <scope>TISSUE SPECIFICITY</scope>
</reference>
<reference key="10">
    <citation type="journal article" date="2018" name="Hum. Genet.">
        <title>MPZL2 is a novel gene associated with autosomal recessive nonsyndromic moderate hearing loss.</title>
        <authorList>
            <person name="Bademci G."/>
            <person name="Abad C."/>
            <person name="Incesulu A."/>
            <person name="Rad A."/>
            <person name="Alper O."/>
            <person name="Kolb S.M."/>
            <person name="Cengiz F.B."/>
            <person name="Diaz-Horta O."/>
            <person name="Silan F."/>
            <person name="Mihci E."/>
            <person name="Ocak E."/>
            <person name="Najafi M."/>
            <person name="Maroofian R."/>
            <person name="Yilmaz E."/>
            <person name="Nur B.G."/>
            <person name="Duman D."/>
            <person name="Guo S."/>
            <person name="Sant D.W."/>
            <person name="Wang G."/>
            <person name="Monje P.V."/>
            <person name="Haaf T."/>
            <person name="Blanton S.H."/>
            <person name="Vona B."/>
            <person name="Walz K."/>
            <person name="Tekin M."/>
        </authorList>
    </citation>
    <scope>INVOLVEMENT IN DFNB111</scope>
</reference>
<reference key="11">
    <citation type="journal article" date="2023" name="Int. J. Pediatr. Otorhinolaryngol.">
        <title>MPZL2 variant analysis with whole exome sequencing in a cohort of Chinese hearing loss patients.</title>
        <authorList>
            <person name="Li W."/>
            <person name="Guo L."/>
            <person name="Chen B."/>
            <person name="Shu Y."/>
            <person name="Li H."/>
        </authorList>
    </citation>
    <scope>VARIANTS DFNB111 PHE-18 AND 74-GLN--ASP-215 DEL</scope>
    <scope>INVOLVEMENT IN DFNB111</scope>
</reference>
<reference key="12">
    <citation type="journal article" date="2024" name="Am. J. Med. Genet. A">
        <title>Recurrent missense variant identified in two unrelated families with MPZL2-related hearing loss, expanding the variant spectrum associated with DFNB111.</title>
        <authorList>
            <person name="Lo E."/>
            <person name="Blair J."/>
            <person name="Yamamoto N."/>
            <person name="Diaz-Miranda M.A."/>
            <person name="Bedoukian E."/>
            <person name="Gray C."/>
            <person name="Lawrence A."/>
            <person name="Dedhia K."/>
            <person name="Elden L.M."/>
            <person name="Germiller J.A."/>
            <person name="Kazahaya K."/>
            <person name="Sobol S.E."/>
            <person name="Luo M."/>
            <person name="Krantz I.D."/>
            <person name="Hartman T.R."/>
        </authorList>
    </citation>
    <scope>VARIANT DFNB111 TRP-94</scope>
    <scope>INVOLVEMENT IN DFNB111</scope>
</reference>